<accession>Q4ZR64</accession>
<protein>
    <recommendedName>
        <fullName evidence="1">Homogentisate 1,2-dioxygenase</fullName>
        <shortName evidence="1">HGDO</shortName>
        <ecNumber evidence="1">1.13.11.5</ecNumber>
    </recommendedName>
    <alternativeName>
        <fullName evidence="1">Homogentisate oxygenase</fullName>
    </alternativeName>
    <alternativeName>
        <fullName evidence="1">Homogentisic acid oxidase</fullName>
    </alternativeName>
    <alternativeName>
        <fullName evidence="1">Homogentisicase</fullName>
    </alternativeName>
</protein>
<name>HGD_PSEU2</name>
<reference key="1">
    <citation type="journal article" date="2005" name="Proc. Natl. Acad. Sci. U.S.A.">
        <title>Comparison of the complete genome sequences of Pseudomonas syringae pv. syringae B728a and pv. tomato DC3000.</title>
        <authorList>
            <person name="Feil H."/>
            <person name="Feil W.S."/>
            <person name="Chain P."/>
            <person name="Larimer F."/>
            <person name="Dibartolo G."/>
            <person name="Copeland A."/>
            <person name="Lykidis A."/>
            <person name="Trong S."/>
            <person name="Nolan M."/>
            <person name="Goltsman E."/>
            <person name="Thiel J."/>
            <person name="Malfatti S."/>
            <person name="Loper J.E."/>
            <person name="Lapidus A."/>
            <person name="Detter J.C."/>
            <person name="Land M."/>
            <person name="Richardson P.M."/>
            <person name="Kyrpides N.C."/>
            <person name="Ivanova N."/>
            <person name="Lindow S.E."/>
        </authorList>
    </citation>
    <scope>NUCLEOTIDE SEQUENCE [LARGE SCALE GENOMIC DNA]</scope>
    <source>
        <strain>B728a</strain>
    </source>
</reference>
<comment type="function">
    <text evidence="1">Involved in the catabolism of homogentisate (2,5-dihydroxyphenylacetate or 2,5-OH-PhAc), a central intermediate in the degradation of phenylalanine and tyrosine. Catalyzes the oxidative ring cleavage of the aromatic ring of homogentisate to yield maleylacetoacetate.</text>
</comment>
<comment type="catalytic activity">
    <reaction evidence="1">
        <text>homogentisate + O2 = 4-maleylacetoacetate + H(+)</text>
        <dbReference type="Rhea" id="RHEA:15449"/>
        <dbReference type="ChEBI" id="CHEBI:15378"/>
        <dbReference type="ChEBI" id="CHEBI:15379"/>
        <dbReference type="ChEBI" id="CHEBI:16169"/>
        <dbReference type="ChEBI" id="CHEBI:17105"/>
        <dbReference type="EC" id="1.13.11.5"/>
    </reaction>
</comment>
<comment type="cofactor">
    <cofactor evidence="1">
        <name>Fe cation</name>
        <dbReference type="ChEBI" id="CHEBI:24875"/>
    </cofactor>
</comment>
<comment type="pathway">
    <text evidence="1">Amino-acid degradation; L-phenylalanine degradation; acetoacetate and fumarate from L-phenylalanine: step 4/6.</text>
</comment>
<comment type="subunit">
    <text evidence="1">Hexamer; dimer of trimers.</text>
</comment>
<comment type="similarity">
    <text evidence="1">Belongs to the homogentisate dioxygenase family.</text>
</comment>
<organism>
    <name type="scientific">Pseudomonas syringae pv. syringae (strain B728a)</name>
    <dbReference type="NCBI Taxonomy" id="205918"/>
    <lineage>
        <taxon>Bacteria</taxon>
        <taxon>Pseudomonadati</taxon>
        <taxon>Pseudomonadota</taxon>
        <taxon>Gammaproteobacteria</taxon>
        <taxon>Pseudomonadales</taxon>
        <taxon>Pseudomonadaceae</taxon>
        <taxon>Pseudomonas</taxon>
        <taxon>Pseudomonas syringae</taxon>
    </lineage>
</organism>
<gene>
    <name evidence="1" type="primary">hmgA</name>
    <name type="ordered locus">Psyr_3326</name>
</gene>
<evidence type="ECO:0000255" key="1">
    <source>
        <dbReference type="HAMAP-Rule" id="MF_00334"/>
    </source>
</evidence>
<proteinExistence type="inferred from homology"/>
<keyword id="KW-0223">Dioxygenase</keyword>
<keyword id="KW-0408">Iron</keyword>
<keyword id="KW-0479">Metal-binding</keyword>
<keyword id="KW-0560">Oxidoreductase</keyword>
<keyword id="KW-0585">Phenylalanine catabolism</keyword>
<keyword id="KW-0828">Tyrosine catabolism</keyword>
<sequence length="434" mass="48391">MAIHSSSDALVYQSGFGNQFSSEALPDALPVGQNSPQKHPLGLYAEQFSGTAFTVARSEARRTWLYRIKPSAAHSRYQRMDRQMAGQEPGPINPNRLRWNAFDIPAAPTDFIDGLIPLASTSAAEQAEGVSVYLYTANTSMQRAFFSADGEWLVVPQQGRLRIVTELGLLDIEPLEIAVLPRGLKFCVQLLDSSARGYLCENHGCALRLPELGPIGSNGLANSRDFLTPVAWFEDSRQPMQLVQKFLGELWSTQLEHSPFDVVGWHGNNVPYKYDLRRFNTIGTVSYDHPDPSIFTVLTSPGAIHGQANIDFVIFPPRWMVAENTFRPPWFHRNLMNEFMGLIDGAYDAKAEGFMPGGASLHNCMSAHGPDNVTAEKAIAAELKPHRIDNTMAFMFETGKVLRPSRHALDCPQLQTDYDACWKDMARTFTQEPR</sequence>
<feature type="chain" id="PRO_1000019536" description="Homogentisate 1,2-dioxygenase">
    <location>
        <begin position="1"/>
        <end position="434"/>
    </location>
</feature>
<feature type="active site" description="Proton acceptor" evidence="1">
    <location>
        <position position="289"/>
    </location>
</feature>
<feature type="binding site" evidence="1">
    <location>
        <position position="332"/>
    </location>
    <ligand>
        <name>Fe cation</name>
        <dbReference type="ChEBI" id="CHEBI:24875"/>
    </ligand>
</feature>
<feature type="binding site" evidence="1">
    <location>
        <position position="338"/>
    </location>
    <ligand>
        <name>Fe cation</name>
        <dbReference type="ChEBI" id="CHEBI:24875"/>
    </ligand>
</feature>
<feature type="binding site" evidence="1">
    <location>
        <position position="347"/>
    </location>
    <ligand>
        <name>homogentisate</name>
        <dbReference type="ChEBI" id="CHEBI:16169"/>
    </ligand>
</feature>
<feature type="binding site" evidence="1">
    <location>
        <position position="368"/>
    </location>
    <ligand>
        <name>Fe cation</name>
        <dbReference type="ChEBI" id="CHEBI:24875"/>
    </ligand>
</feature>
<feature type="binding site" evidence="1">
    <location>
        <position position="368"/>
    </location>
    <ligand>
        <name>homogentisate</name>
        <dbReference type="ChEBI" id="CHEBI:16169"/>
    </ligand>
</feature>
<dbReference type="EC" id="1.13.11.5" evidence="1"/>
<dbReference type="EMBL" id="CP000075">
    <property type="protein sequence ID" value="AAY38358.1"/>
    <property type="molecule type" value="Genomic_DNA"/>
</dbReference>
<dbReference type="RefSeq" id="WP_011268361.1">
    <property type="nucleotide sequence ID" value="NC_007005.1"/>
</dbReference>
<dbReference type="RefSeq" id="YP_236396.1">
    <property type="nucleotide sequence ID" value="NC_007005.1"/>
</dbReference>
<dbReference type="SMR" id="Q4ZR64"/>
<dbReference type="STRING" id="205918.Psyr_3326"/>
<dbReference type="KEGG" id="psb:Psyr_3326"/>
<dbReference type="PATRIC" id="fig|205918.7.peg.3404"/>
<dbReference type="eggNOG" id="COG3508">
    <property type="taxonomic scope" value="Bacteria"/>
</dbReference>
<dbReference type="HOGENOM" id="CLU_027174_0_0_6"/>
<dbReference type="OrthoDB" id="9811253at2"/>
<dbReference type="UniPathway" id="UPA00139">
    <property type="reaction ID" value="UER00339"/>
</dbReference>
<dbReference type="Proteomes" id="UP000000426">
    <property type="component" value="Chromosome"/>
</dbReference>
<dbReference type="GO" id="GO:0005737">
    <property type="term" value="C:cytoplasm"/>
    <property type="evidence" value="ECO:0007669"/>
    <property type="project" value="TreeGrafter"/>
</dbReference>
<dbReference type="GO" id="GO:0004411">
    <property type="term" value="F:homogentisate 1,2-dioxygenase activity"/>
    <property type="evidence" value="ECO:0007669"/>
    <property type="project" value="UniProtKB-UniRule"/>
</dbReference>
<dbReference type="GO" id="GO:0005506">
    <property type="term" value="F:iron ion binding"/>
    <property type="evidence" value="ECO:0007669"/>
    <property type="project" value="UniProtKB-UniRule"/>
</dbReference>
<dbReference type="GO" id="GO:0006559">
    <property type="term" value="P:L-phenylalanine catabolic process"/>
    <property type="evidence" value="ECO:0007669"/>
    <property type="project" value="UniProtKB-UniRule"/>
</dbReference>
<dbReference type="GO" id="GO:0006572">
    <property type="term" value="P:tyrosine catabolic process"/>
    <property type="evidence" value="ECO:0007669"/>
    <property type="project" value="UniProtKB-UniRule"/>
</dbReference>
<dbReference type="CDD" id="cd07000">
    <property type="entry name" value="cupin_HGO_N"/>
    <property type="match status" value="1"/>
</dbReference>
<dbReference type="FunFam" id="2.60.120.10:FF:000036">
    <property type="entry name" value="Homogentisate 1,2-dioxygenase"/>
    <property type="match status" value="1"/>
</dbReference>
<dbReference type="Gene3D" id="2.60.120.10">
    <property type="entry name" value="Jelly Rolls"/>
    <property type="match status" value="1"/>
</dbReference>
<dbReference type="HAMAP" id="MF_00334">
    <property type="entry name" value="Homogentis_dioxygen"/>
    <property type="match status" value="1"/>
</dbReference>
<dbReference type="InterPro" id="IPR046451">
    <property type="entry name" value="HgmA_C"/>
</dbReference>
<dbReference type="InterPro" id="IPR046452">
    <property type="entry name" value="HgmA_N"/>
</dbReference>
<dbReference type="InterPro" id="IPR005708">
    <property type="entry name" value="Homogentis_dOase"/>
</dbReference>
<dbReference type="InterPro" id="IPR022950">
    <property type="entry name" value="Homogentis_dOase_bac"/>
</dbReference>
<dbReference type="InterPro" id="IPR014710">
    <property type="entry name" value="RmlC-like_jellyroll"/>
</dbReference>
<dbReference type="InterPro" id="IPR011051">
    <property type="entry name" value="RmlC_Cupin_sf"/>
</dbReference>
<dbReference type="NCBIfam" id="TIGR01015">
    <property type="entry name" value="hmgA"/>
    <property type="match status" value="1"/>
</dbReference>
<dbReference type="PANTHER" id="PTHR11056">
    <property type="entry name" value="HOMOGENTISATE 1,2-DIOXYGENASE"/>
    <property type="match status" value="1"/>
</dbReference>
<dbReference type="PANTHER" id="PTHR11056:SF0">
    <property type="entry name" value="HOMOGENTISATE 1,2-DIOXYGENASE"/>
    <property type="match status" value="1"/>
</dbReference>
<dbReference type="Pfam" id="PF04209">
    <property type="entry name" value="HgmA_C"/>
    <property type="match status" value="1"/>
</dbReference>
<dbReference type="Pfam" id="PF20510">
    <property type="entry name" value="HgmA_N"/>
    <property type="match status" value="1"/>
</dbReference>
<dbReference type="SUPFAM" id="SSF51182">
    <property type="entry name" value="RmlC-like cupins"/>
    <property type="match status" value="1"/>
</dbReference>